<keyword id="KW-0489">Methyltransferase</keyword>
<keyword id="KW-1185">Reference proteome</keyword>
<keyword id="KW-0694">RNA-binding</keyword>
<keyword id="KW-0949">S-adenosyl-L-methionine</keyword>
<keyword id="KW-0808">Transferase</keyword>
<keyword id="KW-0819">tRNA processing</keyword>
<protein>
    <recommendedName>
        <fullName evidence="8">tRNA (adenine(37)-N6)-methyltransferase</fullName>
        <ecNumber evidence="4">2.1.1.-</ecNumber>
    </recommendedName>
    <alternativeName>
        <fullName evidence="7">tRNA (m6t6A37) methyltransferase</fullName>
    </alternativeName>
    <alternativeName>
        <fullName evidence="6">tRNA methyltransferase O</fullName>
    </alternativeName>
</protein>
<reference key="1">
    <citation type="submission" date="1993-04" db="EMBL/GenBank/DDBJ databases">
        <authorList>
            <person name="Miyamoto K."/>
        </authorList>
    </citation>
    <scope>NUCLEOTIDE SEQUENCE [GENOMIC DNA]</scope>
    <source>
        <strain>K12</strain>
    </source>
</reference>
<reference key="2">
    <citation type="journal article" date="1992" name="J. Bacteriol.">
        <title>Identification, cloning, and characterization of rcsF, a new regulator gene for exopolysaccharide synthesis that suppresses the division mutation ftsZ84 in Escherichia coli K-12.</title>
        <authorList>
            <person name="Gervais F.G."/>
            <person name="Drapeau G.R."/>
        </authorList>
    </citation>
    <scope>NUCLEOTIDE SEQUENCE [GENOMIC DNA]</scope>
    <source>
        <strain>K12</strain>
    </source>
</reference>
<reference key="3">
    <citation type="submission" date="1996-02" db="EMBL/GenBank/DDBJ databases">
        <title>Systematic sequencing of the Escherichia coli genome: analysis of the 4.0 - 6.0 min (189,987 - 281,416bp) region.</title>
        <authorList>
            <person name="Takemoto K."/>
            <person name="Mori H."/>
            <person name="Murayama N."/>
            <person name="Kataoka K."/>
            <person name="Yano M."/>
            <person name="Itoh T."/>
            <person name="Yamamoto Y."/>
            <person name="Inokuchi H."/>
            <person name="Miki T."/>
            <person name="Hatada E."/>
            <person name="Fukuda R."/>
            <person name="Ichihara S."/>
            <person name="Mizuno T."/>
            <person name="Makino K."/>
            <person name="Nakata A."/>
            <person name="Yura T."/>
            <person name="Sampei G."/>
            <person name="Mizobuchi K."/>
        </authorList>
    </citation>
    <scope>NUCLEOTIDE SEQUENCE [LARGE SCALE GENOMIC DNA]</scope>
    <source>
        <strain>K12 / W3110 / ATCC 27325 / DSM 5911</strain>
    </source>
</reference>
<reference key="4">
    <citation type="submission" date="1997-01" db="EMBL/GenBank/DDBJ databases">
        <title>Sequence of minutes 4-25 of Escherichia coli.</title>
        <authorList>
            <person name="Chung E."/>
            <person name="Allen E."/>
            <person name="Araujo R."/>
            <person name="Aparicio A.M."/>
            <person name="Davis K."/>
            <person name="Duncan M."/>
            <person name="Federspiel N."/>
            <person name="Hyman R."/>
            <person name="Kalman S."/>
            <person name="Komp C."/>
            <person name="Kurdi O."/>
            <person name="Lew H."/>
            <person name="Lin D."/>
            <person name="Namath A."/>
            <person name="Oefner P."/>
            <person name="Roberts D."/>
            <person name="Schramm S."/>
            <person name="Davis R.W."/>
        </authorList>
    </citation>
    <scope>NUCLEOTIDE SEQUENCE [LARGE SCALE GENOMIC DNA]</scope>
    <source>
        <strain>K12 / MG1655 / ATCC 47076</strain>
    </source>
</reference>
<reference key="5">
    <citation type="journal article" date="1997" name="Science">
        <title>The complete genome sequence of Escherichia coli K-12.</title>
        <authorList>
            <person name="Blattner F.R."/>
            <person name="Plunkett G. III"/>
            <person name="Bloch C.A."/>
            <person name="Perna N.T."/>
            <person name="Burland V."/>
            <person name="Riley M."/>
            <person name="Collado-Vides J."/>
            <person name="Glasner J.D."/>
            <person name="Rode C.K."/>
            <person name="Mayhew G.F."/>
            <person name="Gregor J."/>
            <person name="Davis N.W."/>
            <person name="Kirkpatrick H.A."/>
            <person name="Goeden M.A."/>
            <person name="Rose D.J."/>
            <person name="Mau B."/>
            <person name="Shao Y."/>
        </authorList>
    </citation>
    <scope>NUCLEOTIDE SEQUENCE [LARGE SCALE GENOMIC DNA]</scope>
    <source>
        <strain>K12 / MG1655 / ATCC 47076</strain>
    </source>
</reference>
<reference key="6">
    <citation type="journal article" date="2006" name="Mol. Syst. Biol.">
        <title>Highly accurate genome sequences of Escherichia coli K-12 strains MG1655 and W3110.</title>
        <authorList>
            <person name="Hayashi K."/>
            <person name="Morooka N."/>
            <person name="Yamamoto Y."/>
            <person name="Fujita K."/>
            <person name="Isono K."/>
            <person name="Choi S."/>
            <person name="Ohtsubo E."/>
            <person name="Baba T."/>
            <person name="Wanner B.L."/>
            <person name="Mori H."/>
            <person name="Horiuchi T."/>
        </authorList>
    </citation>
    <scope>NUCLEOTIDE SEQUENCE [LARGE SCALE GENOMIC DNA]</scope>
    <source>
        <strain>K12 / W3110 / ATCC 27325 / DSM 5911</strain>
    </source>
</reference>
<reference key="7">
    <citation type="journal article" date="1998" name="J. Bacteriol.">
        <title>The methyl group of the N6-methyl-N6-threonylcarbamoyladenosine in tRNA of Escherichia coli modestly improves the efficiency of the tRNA.</title>
        <authorList>
            <person name="Qian Q."/>
            <person name="Curran J.F."/>
            <person name="Bjork G.R."/>
        </authorList>
    </citation>
    <scope>PROBABLE FUNCTION</scope>
    <source>
        <strain>K12</strain>
    </source>
</reference>
<reference key="8">
    <citation type="journal article" date="2014" name="Nucleic Acids Res.">
        <title>Discovery of the beta-barrel-type RNA methyltransferase responsible for N6-methylation of N6-threonylcarbamoyladenosine in tRNAs.</title>
        <authorList>
            <person name="Kimura S."/>
            <person name="Miyauchi K."/>
            <person name="Ikeuchi Y."/>
            <person name="Thiaville P.C."/>
            <person name="Crecy-Lagard V.D."/>
            <person name="Suzuki T."/>
        </authorList>
    </citation>
    <scope>FUNCTION</scope>
    <scope>CATALYTIC ACTIVITY</scope>
    <scope>TRNA-BINDING</scope>
    <scope>MUTAGENESIS OF ARG-92; LYS-136; ASP-194 AND ARG-196</scope>
</reference>
<evidence type="ECO:0000250" key="1">
    <source>
        <dbReference type="UniProtKB" id="O29998"/>
    </source>
</evidence>
<evidence type="ECO:0000250" key="2">
    <source>
        <dbReference type="UniProtKB" id="P44740"/>
    </source>
</evidence>
<evidence type="ECO:0000255" key="3">
    <source>
        <dbReference type="PROSITE-ProRule" id="PRU01003"/>
    </source>
</evidence>
<evidence type="ECO:0000269" key="4">
    <source>
    </source>
</evidence>
<evidence type="ECO:0000269" key="5">
    <source>
    </source>
</evidence>
<evidence type="ECO:0000303" key="6">
    <source>
    </source>
</evidence>
<evidence type="ECO:0000303" key="7">
    <source>
    </source>
</evidence>
<evidence type="ECO:0000305" key="8"/>
<dbReference type="EC" id="2.1.1.-" evidence="4"/>
<dbReference type="EMBL" id="D15061">
    <property type="protein sequence ID" value="BAA03655.1"/>
    <property type="molecule type" value="Genomic_DNA"/>
</dbReference>
<dbReference type="EMBL" id="L04474">
    <property type="protein sequence ID" value="AAA24509.1"/>
    <property type="status" value="ALT_FRAME"/>
    <property type="molecule type" value="Genomic_DNA"/>
</dbReference>
<dbReference type="EMBL" id="U70214">
    <property type="protein sequence ID" value="AAB08623.1"/>
    <property type="molecule type" value="Genomic_DNA"/>
</dbReference>
<dbReference type="EMBL" id="U00096">
    <property type="protein sequence ID" value="AAC73306.1"/>
    <property type="molecule type" value="Genomic_DNA"/>
</dbReference>
<dbReference type="EMBL" id="AP009048">
    <property type="protein sequence ID" value="BAA77871.1"/>
    <property type="molecule type" value="Genomic_DNA"/>
</dbReference>
<dbReference type="PIR" id="C47040">
    <property type="entry name" value="C47040"/>
</dbReference>
<dbReference type="PIR" id="C64744">
    <property type="entry name" value="C64744"/>
</dbReference>
<dbReference type="RefSeq" id="NP_414737.1">
    <property type="nucleotide sequence ID" value="NC_000913.3"/>
</dbReference>
<dbReference type="RefSeq" id="WP_000094011.1">
    <property type="nucleotide sequence ID" value="NZ_STEB01000032.1"/>
</dbReference>
<dbReference type="SMR" id="P28634"/>
<dbReference type="BioGRID" id="4259756">
    <property type="interactions" value="20"/>
</dbReference>
<dbReference type="BioGRID" id="853352">
    <property type="interactions" value="1"/>
</dbReference>
<dbReference type="DIP" id="DIP-11195N"/>
<dbReference type="FunCoup" id="P28634">
    <property type="interactions" value="215"/>
</dbReference>
<dbReference type="IntAct" id="P28634">
    <property type="interactions" value="6"/>
</dbReference>
<dbReference type="STRING" id="511145.b0195"/>
<dbReference type="jPOST" id="P28634"/>
<dbReference type="PaxDb" id="511145-b0195"/>
<dbReference type="EnsemblBacteria" id="AAC73306">
    <property type="protein sequence ID" value="AAC73306"/>
    <property type="gene ID" value="b0195"/>
</dbReference>
<dbReference type="GeneID" id="93777228"/>
<dbReference type="GeneID" id="949112"/>
<dbReference type="KEGG" id="ecj:JW0191"/>
<dbReference type="KEGG" id="eco:b0195"/>
<dbReference type="KEGG" id="ecoc:C3026_00905"/>
<dbReference type="PATRIC" id="fig|1411691.4.peg.2083"/>
<dbReference type="EchoBASE" id="EB1466"/>
<dbReference type="eggNOG" id="COG1720">
    <property type="taxonomic scope" value="Bacteria"/>
</dbReference>
<dbReference type="HOGENOM" id="CLU_013458_3_0_6"/>
<dbReference type="InParanoid" id="P28634"/>
<dbReference type="OMA" id="CFKEKFA"/>
<dbReference type="OrthoDB" id="9804309at2"/>
<dbReference type="PhylomeDB" id="P28634"/>
<dbReference type="BioCyc" id="EcoCyc:EG11503-MONOMER"/>
<dbReference type="BioCyc" id="MetaCyc:EG11503-MONOMER"/>
<dbReference type="PRO" id="PR:P28634"/>
<dbReference type="Proteomes" id="UP000000625">
    <property type="component" value="Chromosome"/>
</dbReference>
<dbReference type="GO" id="GO:0089715">
    <property type="term" value="F:tRNA (L-threonylcarbamoyladenosine(37)-C2) methyltransferase activity"/>
    <property type="evidence" value="ECO:0000314"/>
    <property type="project" value="EcoCyc"/>
</dbReference>
<dbReference type="GO" id="GO:0000049">
    <property type="term" value="F:tRNA binding"/>
    <property type="evidence" value="ECO:0000314"/>
    <property type="project" value="UniProtKB"/>
</dbReference>
<dbReference type="GO" id="GO:0030488">
    <property type="term" value="P:tRNA methylation"/>
    <property type="evidence" value="ECO:0000315"/>
    <property type="project" value="EcoCyc"/>
</dbReference>
<dbReference type="CDD" id="cd09281">
    <property type="entry name" value="UPF0066"/>
    <property type="match status" value="1"/>
</dbReference>
<dbReference type="FunFam" id="2.40.30.70:FF:000001">
    <property type="entry name" value="tRNA (N6-threonylcarbamoyladenosine(37)-N6)-methyltransferase TrmO"/>
    <property type="match status" value="1"/>
</dbReference>
<dbReference type="FunFam" id="3.30.2310.10:FF:000001">
    <property type="entry name" value="tRNA (N6-threonylcarbamoyladenosine(37)-N6)-methyltransferase TrmO"/>
    <property type="match status" value="1"/>
</dbReference>
<dbReference type="Gene3D" id="2.40.30.70">
    <property type="entry name" value="YaeB-like"/>
    <property type="match status" value="1"/>
</dbReference>
<dbReference type="Gene3D" id="3.30.2310.10">
    <property type="entry name" value="YaeB-like"/>
    <property type="match status" value="1"/>
</dbReference>
<dbReference type="InterPro" id="IPR023370">
    <property type="entry name" value="TrmO-like_N"/>
</dbReference>
<dbReference type="InterPro" id="IPR041369">
    <property type="entry name" value="TrmO_C"/>
</dbReference>
<dbReference type="InterPro" id="IPR023368">
    <property type="entry name" value="UPF0066_cons_site"/>
</dbReference>
<dbReference type="InterPro" id="IPR040372">
    <property type="entry name" value="YaeB-like"/>
</dbReference>
<dbReference type="InterPro" id="IPR036413">
    <property type="entry name" value="YaeB-like_sf"/>
</dbReference>
<dbReference type="InterPro" id="IPR036414">
    <property type="entry name" value="YaeB_N_sf"/>
</dbReference>
<dbReference type="NCBIfam" id="TIGR00104">
    <property type="entry name" value="tRNA_TsaA"/>
    <property type="match status" value="1"/>
</dbReference>
<dbReference type="PANTHER" id="PTHR12818">
    <property type="entry name" value="TRNA (ADENINE(37)-N6)-METHYLTRANSFERASE"/>
    <property type="match status" value="1"/>
</dbReference>
<dbReference type="PANTHER" id="PTHR12818:SF0">
    <property type="entry name" value="TRNA (ADENINE(37)-N6)-METHYLTRANSFERASE"/>
    <property type="match status" value="1"/>
</dbReference>
<dbReference type="Pfam" id="PF18389">
    <property type="entry name" value="TrmO_C"/>
    <property type="match status" value="1"/>
</dbReference>
<dbReference type="Pfam" id="PF01980">
    <property type="entry name" value="TrmO_N"/>
    <property type="match status" value="1"/>
</dbReference>
<dbReference type="SUPFAM" id="SSF118196">
    <property type="entry name" value="YaeB-like"/>
    <property type="match status" value="1"/>
</dbReference>
<dbReference type="PROSITE" id="PS01318">
    <property type="entry name" value="TSAA_1"/>
    <property type="match status" value="1"/>
</dbReference>
<dbReference type="PROSITE" id="PS51668">
    <property type="entry name" value="TSAA_2"/>
    <property type="match status" value="1"/>
</dbReference>
<sequence length="235" mass="26362">MSSFQFEQIGVIRSPYKEKFAVPRQPGLVKSANGELHLIAPYNQADAVRGLEAFSHLWILFVFHQTMEGGWRPTVRPPRLGGNARMGVFATRSTFRPNPIGMSLVELKEVVCHKDSVILKLGSLDLVDGTPVVDIKPYLPFAESLPDASASYAQSAPAAEMAVSFTAEVEKQLLTLEKRYPQLTLFIREVLAQDPRPAYRKGEETGKTYAVWLHDFNVRWRVTDAGFEVFALEPR</sequence>
<gene>
    <name evidence="6" type="primary">trmO</name>
    <name evidence="7" type="synonym">tsaA</name>
    <name type="synonym">yaeB</name>
    <name type="ordered locus">b0195</name>
    <name type="ordered locus">JW0191</name>
</gene>
<organism>
    <name type="scientific">Escherichia coli (strain K12)</name>
    <dbReference type="NCBI Taxonomy" id="83333"/>
    <lineage>
        <taxon>Bacteria</taxon>
        <taxon>Pseudomonadati</taxon>
        <taxon>Pseudomonadota</taxon>
        <taxon>Gammaproteobacteria</taxon>
        <taxon>Enterobacterales</taxon>
        <taxon>Enterobacteriaceae</taxon>
        <taxon>Escherichia</taxon>
    </lineage>
</organism>
<feature type="chain" id="PRO_0000155617" description="tRNA (adenine(37)-N6)-methyltransferase">
    <location>
        <begin position="1"/>
        <end position="235"/>
    </location>
</feature>
<feature type="domain" description="TsaA-like" evidence="3">
    <location>
        <begin position="6"/>
        <end position="147"/>
    </location>
</feature>
<feature type="binding site" evidence="1">
    <location>
        <begin position="23"/>
        <end position="25"/>
    </location>
    <ligand>
        <name>S-adenosyl-L-methionine</name>
        <dbReference type="ChEBI" id="CHEBI:59789"/>
    </ligand>
</feature>
<feature type="binding site" evidence="1">
    <location>
        <begin position="64"/>
        <end position="65"/>
    </location>
    <ligand>
        <name>S-adenosyl-L-methionine</name>
        <dbReference type="ChEBI" id="CHEBI:59789"/>
    </ligand>
</feature>
<feature type="binding site" evidence="1">
    <location>
        <position position="92"/>
    </location>
    <ligand>
        <name>S-adenosyl-L-methionine</name>
        <dbReference type="ChEBI" id="CHEBI:59789"/>
    </ligand>
</feature>
<feature type="binding site" evidence="1">
    <location>
        <begin position="127"/>
        <end position="130"/>
    </location>
    <ligand>
        <name>S-adenosyl-L-methionine</name>
        <dbReference type="ChEBI" id="CHEBI:59789"/>
    </ligand>
</feature>
<feature type="mutagenesis site" description="Inhibits tRNA m(6)t(6)A37 formation." evidence="4">
    <original>R</original>
    <variation>A</variation>
    <location>
        <position position="92"/>
    </location>
</feature>
<feature type="mutagenesis site" description="Inhibits tRNA m(6)t(6)A37 formation." evidence="4">
    <original>K</original>
    <variation>A</variation>
    <location>
        <position position="136"/>
    </location>
</feature>
<feature type="mutagenesis site" description="Inhibits tRNA m(6)t(6)A37 formation; when associated with A-196." evidence="4">
    <original>D</original>
    <variation>A</variation>
    <location>
        <position position="194"/>
    </location>
</feature>
<feature type="mutagenesis site" description="Inhibits tRNA m(6)t(6)A37 formation; when associated with A-194." evidence="4">
    <original>R</original>
    <variation>A</variation>
    <location>
        <position position="196"/>
    </location>
</feature>
<accession>P28634</accession>
<accession>Q47676</accession>
<proteinExistence type="evidence at protein level"/>
<name>TRMO_ECOLI</name>
<comment type="function">
    <text evidence="4 5">S-adenosyl-L-methionine-dependent methyltransferase responsible for the addition of the methyl group in the formation of N6-methyl-N6-threonylcarbamoyladenosine at position 37 (m(6)t(6)A37) of the tRNA anticodon loop of tRNA(Thr)(GGU) that read codons starting with adenosine (PubMed:25063302, PubMed:9537379). The methyl group of m(6)t(6)A37 appears to slightly improve the efficiency of the tRNA decoding ability (PubMed:25063302, PubMed:9537379).</text>
</comment>
<comment type="catalytic activity">
    <reaction evidence="4">
        <text>N(6)-L-threonylcarbamoyladenosine(37) in tRNA + S-adenosyl-L-methionine = N(6)-methyl,N(6)-L-threonylcarbamoyladenosine(37) in tRNA + S-adenosyl-L-homocysteine + H(+)</text>
        <dbReference type="Rhea" id="RHEA:70027"/>
        <dbReference type="Rhea" id="RHEA-COMP:10163"/>
        <dbReference type="Rhea" id="RHEA-COMP:17808"/>
        <dbReference type="ChEBI" id="CHEBI:15378"/>
        <dbReference type="ChEBI" id="CHEBI:57856"/>
        <dbReference type="ChEBI" id="CHEBI:59789"/>
        <dbReference type="ChEBI" id="CHEBI:74418"/>
        <dbReference type="ChEBI" id="CHEBI:188470"/>
    </reaction>
    <physiologicalReaction direction="left-to-right" evidence="4">
        <dbReference type="Rhea" id="RHEA:70028"/>
    </physiologicalReaction>
</comment>
<comment type="subunit">
    <text evidence="2">Homodimer.</text>
</comment>
<comment type="similarity">
    <text evidence="8">Belongs to the tRNA methyltransferase O family.</text>
</comment>
<comment type="sequence caution" evidence="8">
    <conflict type="frameshift">
        <sequence resource="EMBL-CDS" id="AAA24509"/>
    </conflict>
</comment>